<keyword id="KW-0143">Chaperone</keyword>
<keyword id="KW-0963">Cytoplasm</keyword>
<keyword id="KW-0653">Protein transport</keyword>
<keyword id="KW-0811">Translocation</keyword>
<keyword id="KW-0813">Transport</keyword>
<accession>B3PVT7</accession>
<reference key="1">
    <citation type="journal article" date="2010" name="Appl. Environ. Microbiol.">
        <title>Conserved symbiotic plasmid DNA sequences in the multireplicon pangenomic structure of Rhizobium etli.</title>
        <authorList>
            <person name="Gonzalez V."/>
            <person name="Acosta J.L."/>
            <person name="Santamaria R.I."/>
            <person name="Bustos P."/>
            <person name="Fernandez J.L."/>
            <person name="Hernandez Gonzalez I.L."/>
            <person name="Diaz R."/>
            <person name="Flores M."/>
            <person name="Palacios R."/>
            <person name="Mora J."/>
            <person name="Davila G."/>
        </authorList>
    </citation>
    <scope>NUCLEOTIDE SEQUENCE [LARGE SCALE GENOMIC DNA]</scope>
    <source>
        <strain>CIAT 652</strain>
    </source>
</reference>
<sequence length="159" mass="17563">MADDNNNGATNPTLSILAQYTKDLSFENPGAPRSLQARDKAPTININVNVNANPLSDTDFDVVLSLNAEAKDDDKTVFHTELVYGGVFRVAGFPQEHMLPVLFIECPRMLFPFARQIIADVTRNGGFPPLMIDPIDFTQMFAQRVAEEQARAKVQAVPN</sequence>
<gene>
    <name evidence="1" type="primary">secB</name>
    <name type="ordered locus">RHECIAT_CH0000007</name>
</gene>
<comment type="function">
    <text evidence="1">One of the proteins required for the normal export of preproteins out of the cell cytoplasm. It is a molecular chaperone that binds to a subset of precursor proteins, maintaining them in a translocation-competent state. It also specifically binds to its receptor SecA.</text>
</comment>
<comment type="subunit">
    <text evidence="1">Homotetramer, a dimer of dimers. One homotetramer interacts with 1 SecA dimer.</text>
</comment>
<comment type="subcellular location">
    <subcellularLocation>
        <location evidence="1">Cytoplasm</location>
    </subcellularLocation>
</comment>
<comment type="similarity">
    <text evidence="1">Belongs to the SecB family.</text>
</comment>
<evidence type="ECO:0000255" key="1">
    <source>
        <dbReference type="HAMAP-Rule" id="MF_00821"/>
    </source>
</evidence>
<dbReference type="EMBL" id="CP001074">
    <property type="protein sequence ID" value="ACE89010.1"/>
    <property type="molecule type" value="Genomic_DNA"/>
</dbReference>
<dbReference type="SMR" id="B3PVT7"/>
<dbReference type="KEGG" id="rec:RHECIAT_CH0000007"/>
<dbReference type="eggNOG" id="COG1952">
    <property type="taxonomic scope" value="Bacteria"/>
</dbReference>
<dbReference type="HOGENOM" id="CLU_111574_0_0_5"/>
<dbReference type="Proteomes" id="UP000008817">
    <property type="component" value="Chromosome"/>
</dbReference>
<dbReference type="GO" id="GO:0005737">
    <property type="term" value="C:cytoplasm"/>
    <property type="evidence" value="ECO:0007669"/>
    <property type="project" value="UniProtKB-SubCell"/>
</dbReference>
<dbReference type="GO" id="GO:0051082">
    <property type="term" value="F:unfolded protein binding"/>
    <property type="evidence" value="ECO:0007669"/>
    <property type="project" value="InterPro"/>
</dbReference>
<dbReference type="GO" id="GO:0006457">
    <property type="term" value="P:protein folding"/>
    <property type="evidence" value="ECO:0007669"/>
    <property type="project" value="UniProtKB-UniRule"/>
</dbReference>
<dbReference type="GO" id="GO:0051262">
    <property type="term" value="P:protein tetramerization"/>
    <property type="evidence" value="ECO:0007669"/>
    <property type="project" value="InterPro"/>
</dbReference>
<dbReference type="GO" id="GO:0015031">
    <property type="term" value="P:protein transport"/>
    <property type="evidence" value="ECO:0007669"/>
    <property type="project" value="UniProtKB-UniRule"/>
</dbReference>
<dbReference type="Gene3D" id="3.10.420.10">
    <property type="entry name" value="SecB-like"/>
    <property type="match status" value="1"/>
</dbReference>
<dbReference type="HAMAP" id="MF_00821">
    <property type="entry name" value="SecB"/>
    <property type="match status" value="1"/>
</dbReference>
<dbReference type="InterPro" id="IPR003708">
    <property type="entry name" value="SecB"/>
</dbReference>
<dbReference type="InterPro" id="IPR035958">
    <property type="entry name" value="SecB-like_sf"/>
</dbReference>
<dbReference type="NCBIfam" id="NF004392">
    <property type="entry name" value="PRK05751.1-3"/>
    <property type="match status" value="1"/>
</dbReference>
<dbReference type="NCBIfam" id="TIGR00809">
    <property type="entry name" value="secB"/>
    <property type="match status" value="1"/>
</dbReference>
<dbReference type="PANTHER" id="PTHR36918">
    <property type="match status" value="1"/>
</dbReference>
<dbReference type="PANTHER" id="PTHR36918:SF1">
    <property type="entry name" value="PROTEIN-EXPORT PROTEIN SECB"/>
    <property type="match status" value="1"/>
</dbReference>
<dbReference type="Pfam" id="PF02556">
    <property type="entry name" value="SecB"/>
    <property type="match status" value="1"/>
</dbReference>
<dbReference type="PRINTS" id="PR01594">
    <property type="entry name" value="SECBCHAPRONE"/>
</dbReference>
<dbReference type="SUPFAM" id="SSF54611">
    <property type="entry name" value="SecB-like"/>
    <property type="match status" value="1"/>
</dbReference>
<name>SECB_RHIE6</name>
<proteinExistence type="inferred from homology"/>
<organism>
    <name type="scientific">Rhizobium etli (strain CIAT 652)</name>
    <dbReference type="NCBI Taxonomy" id="491916"/>
    <lineage>
        <taxon>Bacteria</taxon>
        <taxon>Pseudomonadati</taxon>
        <taxon>Pseudomonadota</taxon>
        <taxon>Alphaproteobacteria</taxon>
        <taxon>Hyphomicrobiales</taxon>
        <taxon>Rhizobiaceae</taxon>
        <taxon>Rhizobium/Agrobacterium group</taxon>
        <taxon>Rhizobium</taxon>
    </lineage>
</organism>
<protein>
    <recommendedName>
        <fullName evidence="1">Protein-export protein SecB</fullName>
    </recommendedName>
</protein>
<feature type="chain" id="PRO_1000195335" description="Protein-export protein SecB">
    <location>
        <begin position="1"/>
        <end position="159"/>
    </location>
</feature>